<comment type="function">
    <text evidence="1">This protein is located at the 30S-50S ribosomal subunit interface and may play a role in the structure and function of the aminoacyl-tRNA binding site.</text>
</comment>
<comment type="similarity">
    <text evidence="2">Belongs to the bacterial ribosomal protein bL19 family.</text>
</comment>
<evidence type="ECO:0000250" key="1"/>
<evidence type="ECO:0000305" key="2"/>
<sequence>MTMNAQAIINSIEAEFLKEDLPTIHVGDTIKVGVKIVEGGKERIQPYEGTVIAKRNGGISETITVRKIFQGVGVERVFLLHSPRVASIKVLRRGKVRRAKLYYLRDRVGKATRIKQRFDRAL</sequence>
<keyword id="KW-1185">Reference proteome</keyword>
<keyword id="KW-0687">Ribonucleoprotein</keyword>
<keyword id="KW-0689">Ribosomal protein</keyword>
<protein>
    <recommendedName>
        <fullName evidence="2">Large ribosomal subunit protein bL19</fullName>
    </recommendedName>
    <alternativeName>
        <fullName>50S ribosomal protein L19</fullName>
    </alternativeName>
</protein>
<organism>
    <name type="scientific">Synechocystis sp. (strain ATCC 27184 / PCC 6803 / Kazusa)</name>
    <dbReference type="NCBI Taxonomy" id="1111708"/>
    <lineage>
        <taxon>Bacteria</taxon>
        <taxon>Bacillati</taxon>
        <taxon>Cyanobacteriota</taxon>
        <taxon>Cyanophyceae</taxon>
        <taxon>Synechococcales</taxon>
        <taxon>Merismopediaceae</taxon>
        <taxon>Synechocystis</taxon>
    </lineage>
</organism>
<gene>
    <name type="primary">rplS</name>
    <name type="synonym">rpl19</name>
    <name type="ordered locus">sll1740</name>
</gene>
<accession>P36239</accession>
<dbReference type="EMBL" id="X72627">
    <property type="protein sequence ID" value="CAA51203.1"/>
    <property type="molecule type" value="Genomic_DNA"/>
</dbReference>
<dbReference type="EMBL" id="BA000022">
    <property type="protein sequence ID" value="BAA17422.1"/>
    <property type="molecule type" value="Genomic_DNA"/>
</dbReference>
<dbReference type="PIR" id="S33697">
    <property type="entry name" value="S33697"/>
</dbReference>
<dbReference type="SMR" id="P36239"/>
<dbReference type="FunCoup" id="P36239">
    <property type="interactions" value="423"/>
</dbReference>
<dbReference type="STRING" id="1148.gene:10498286"/>
<dbReference type="PaxDb" id="1148-1652501"/>
<dbReference type="EnsemblBacteria" id="BAA17422">
    <property type="protein sequence ID" value="BAA17422"/>
    <property type="gene ID" value="BAA17422"/>
</dbReference>
<dbReference type="KEGG" id="syn:sll1740"/>
<dbReference type="eggNOG" id="COG0335">
    <property type="taxonomic scope" value="Bacteria"/>
</dbReference>
<dbReference type="InParanoid" id="P36239"/>
<dbReference type="PhylomeDB" id="P36239"/>
<dbReference type="Proteomes" id="UP000001425">
    <property type="component" value="Chromosome"/>
</dbReference>
<dbReference type="GO" id="GO:0022625">
    <property type="term" value="C:cytosolic large ribosomal subunit"/>
    <property type="evidence" value="ECO:0000318"/>
    <property type="project" value="GO_Central"/>
</dbReference>
<dbReference type="GO" id="GO:0003735">
    <property type="term" value="F:structural constituent of ribosome"/>
    <property type="evidence" value="ECO:0000318"/>
    <property type="project" value="GO_Central"/>
</dbReference>
<dbReference type="GO" id="GO:0006412">
    <property type="term" value="P:translation"/>
    <property type="evidence" value="ECO:0007669"/>
    <property type="project" value="UniProtKB-UniRule"/>
</dbReference>
<dbReference type="FunFam" id="2.30.30.790:FF:000001">
    <property type="entry name" value="50S ribosomal protein L19"/>
    <property type="match status" value="1"/>
</dbReference>
<dbReference type="Gene3D" id="2.30.30.790">
    <property type="match status" value="1"/>
</dbReference>
<dbReference type="HAMAP" id="MF_00402">
    <property type="entry name" value="Ribosomal_bL19"/>
    <property type="match status" value="1"/>
</dbReference>
<dbReference type="InterPro" id="IPR001857">
    <property type="entry name" value="Ribosomal_bL19"/>
</dbReference>
<dbReference type="InterPro" id="IPR018257">
    <property type="entry name" value="Ribosomal_bL19_CS"/>
</dbReference>
<dbReference type="InterPro" id="IPR038657">
    <property type="entry name" value="Ribosomal_bL19_sf"/>
</dbReference>
<dbReference type="InterPro" id="IPR008991">
    <property type="entry name" value="Translation_prot_SH3-like_sf"/>
</dbReference>
<dbReference type="NCBIfam" id="TIGR01024">
    <property type="entry name" value="rplS_bact"/>
    <property type="match status" value="1"/>
</dbReference>
<dbReference type="PANTHER" id="PTHR15680:SF9">
    <property type="entry name" value="LARGE RIBOSOMAL SUBUNIT PROTEIN BL19M"/>
    <property type="match status" value="1"/>
</dbReference>
<dbReference type="PANTHER" id="PTHR15680">
    <property type="entry name" value="RIBOSOMAL PROTEIN L19"/>
    <property type="match status" value="1"/>
</dbReference>
<dbReference type="Pfam" id="PF01245">
    <property type="entry name" value="Ribosomal_L19"/>
    <property type="match status" value="1"/>
</dbReference>
<dbReference type="PIRSF" id="PIRSF002191">
    <property type="entry name" value="Ribosomal_L19"/>
    <property type="match status" value="1"/>
</dbReference>
<dbReference type="PRINTS" id="PR00061">
    <property type="entry name" value="RIBOSOMALL19"/>
</dbReference>
<dbReference type="SUPFAM" id="SSF50104">
    <property type="entry name" value="Translation proteins SH3-like domain"/>
    <property type="match status" value="1"/>
</dbReference>
<dbReference type="PROSITE" id="PS01015">
    <property type="entry name" value="RIBOSOMAL_L19"/>
    <property type="match status" value="1"/>
</dbReference>
<reference key="1">
    <citation type="journal article" date="1993" name="Nucleic Acids Res.">
        <title>Sequence of the cyanobacterial tRNA(w) gene in Synechocystis PCC 6803: requirement of enzymatic 3' CCA attachment to the acceptor stem.</title>
        <authorList>
            <person name="Schmidt J."/>
            <person name="Subramanian A.R."/>
        </authorList>
    </citation>
    <scope>NUCLEOTIDE SEQUENCE [GENOMIC DNA]</scope>
</reference>
<reference key="2">
    <citation type="journal article" date="1996" name="DNA Res.">
        <title>Sequence analysis of the genome of the unicellular cyanobacterium Synechocystis sp. strain PCC6803. II. Sequence determination of the entire genome and assignment of potential protein-coding regions.</title>
        <authorList>
            <person name="Kaneko T."/>
            <person name="Sato S."/>
            <person name="Kotani H."/>
            <person name="Tanaka A."/>
            <person name="Asamizu E."/>
            <person name="Nakamura Y."/>
            <person name="Miyajima N."/>
            <person name="Hirosawa M."/>
            <person name="Sugiura M."/>
            <person name="Sasamoto S."/>
            <person name="Kimura T."/>
            <person name="Hosouchi T."/>
            <person name="Matsuno A."/>
            <person name="Muraki A."/>
            <person name="Nakazaki N."/>
            <person name="Naruo K."/>
            <person name="Okumura S."/>
            <person name="Shimpo S."/>
            <person name="Takeuchi C."/>
            <person name="Wada T."/>
            <person name="Watanabe A."/>
            <person name="Yamada M."/>
            <person name="Yasuda M."/>
            <person name="Tabata S."/>
        </authorList>
    </citation>
    <scope>NUCLEOTIDE SEQUENCE [LARGE SCALE GENOMIC DNA]</scope>
    <source>
        <strain>ATCC 27184 / PCC 6803 / Kazusa</strain>
    </source>
</reference>
<name>RL19_SYNY3</name>
<feature type="chain" id="PRO_0000163555" description="Large ribosomal subunit protein bL19">
    <location>
        <begin position="1"/>
        <end position="122"/>
    </location>
</feature>
<proteinExistence type="inferred from homology"/>